<name>RL4_STAA1</name>
<keyword id="KW-0687">Ribonucleoprotein</keyword>
<keyword id="KW-0689">Ribosomal protein</keyword>
<keyword id="KW-0694">RNA-binding</keyword>
<keyword id="KW-0699">rRNA-binding</keyword>
<sequence>MANYDVLKLDGTKSGSIELSDAVFGIEPNNSVLFEAINLQRASLRQGTHAVKNRSAVSGGGRKPWKQKGTGRARQGTIRAPQWRGGGIVFGPTPRSYAYKMPKKMRRLALRSALSFKAQENGLTVVDAFNFEAPKTKEFKNVLSTLEQPKKVLVVTENEDVNVELSARNIPGVQVTTAQGLNVLDITNADSLVITEAAAKKVEEVLG</sequence>
<organism>
    <name type="scientific">Staphylococcus aureus (strain Mu3 / ATCC 700698)</name>
    <dbReference type="NCBI Taxonomy" id="418127"/>
    <lineage>
        <taxon>Bacteria</taxon>
        <taxon>Bacillati</taxon>
        <taxon>Bacillota</taxon>
        <taxon>Bacilli</taxon>
        <taxon>Bacillales</taxon>
        <taxon>Staphylococcaceae</taxon>
        <taxon>Staphylococcus</taxon>
    </lineage>
</organism>
<feature type="chain" id="PRO_1000052507" description="Large ribosomal subunit protein uL4">
    <location>
        <begin position="1"/>
        <end position="207"/>
    </location>
</feature>
<feature type="region of interest" description="Disordered" evidence="2">
    <location>
        <begin position="50"/>
        <end position="76"/>
    </location>
</feature>
<protein>
    <recommendedName>
        <fullName evidence="1">Large ribosomal subunit protein uL4</fullName>
    </recommendedName>
    <alternativeName>
        <fullName evidence="3">50S ribosomal protein L4</fullName>
    </alternativeName>
</protein>
<accession>A7X5G2</accession>
<proteinExistence type="inferred from homology"/>
<dbReference type="EMBL" id="AP009324">
    <property type="protein sequence ID" value="BAF79116.1"/>
    <property type="molecule type" value="Genomic_DNA"/>
</dbReference>
<dbReference type="RefSeq" id="WP_000024827.1">
    <property type="nucleotide sequence ID" value="NZ_CTYB01000025.1"/>
</dbReference>
<dbReference type="SMR" id="A7X5G2"/>
<dbReference type="KEGG" id="saw:SAHV_2233"/>
<dbReference type="HOGENOM" id="CLU_041575_5_2_9"/>
<dbReference type="GO" id="GO:1990904">
    <property type="term" value="C:ribonucleoprotein complex"/>
    <property type="evidence" value="ECO:0007669"/>
    <property type="project" value="UniProtKB-KW"/>
</dbReference>
<dbReference type="GO" id="GO:0005840">
    <property type="term" value="C:ribosome"/>
    <property type="evidence" value="ECO:0007669"/>
    <property type="project" value="UniProtKB-KW"/>
</dbReference>
<dbReference type="GO" id="GO:0019843">
    <property type="term" value="F:rRNA binding"/>
    <property type="evidence" value="ECO:0007669"/>
    <property type="project" value="UniProtKB-UniRule"/>
</dbReference>
<dbReference type="GO" id="GO:0003735">
    <property type="term" value="F:structural constituent of ribosome"/>
    <property type="evidence" value="ECO:0007669"/>
    <property type="project" value="InterPro"/>
</dbReference>
<dbReference type="GO" id="GO:0006412">
    <property type="term" value="P:translation"/>
    <property type="evidence" value="ECO:0007669"/>
    <property type="project" value="UniProtKB-UniRule"/>
</dbReference>
<dbReference type="FunFam" id="3.40.1370.10:FF:000003">
    <property type="entry name" value="50S ribosomal protein L4"/>
    <property type="match status" value="1"/>
</dbReference>
<dbReference type="Gene3D" id="3.40.1370.10">
    <property type="match status" value="1"/>
</dbReference>
<dbReference type="HAMAP" id="MF_01328_B">
    <property type="entry name" value="Ribosomal_uL4_B"/>
    <property type="match status" value="1"/>
</dbReference>
<dbReference type="InterPro" id="IPR002136">
    <property type="entry name" value="Ribosomal_uL4"/>
</dbReference>
<dbReference type="InterPro" id="IPR013005">
    <property type="entry name" value="Ribosomal_uL4-like"/>
</dbReference>
<dbReference type="InterPro" id="IPR023574">
    <property type="entry name" value="Ribosomal_uL4_dom_sf"/>
</dbReference>
<dbReference type="NCBIfam" id="TIGR03953">
    <property type="entry name" value="rplD_bact"/>
    <property type="match status" value="1"/>
</dbReference>
<dbReference type="PANTHER" id="PTHR10746">
    <property type="entry name" value="50S RIBOSOMAL PROTEIN L4"/>
    <property type="match status" value="1"/>
</dbReference>
<dbReference type="PANTHER" id="PTHR10746:SF6">
    <property type="entry name" value="LARGE RIBOSOMAL SUBUNIT PROTEIN UL4M"/>
    <property type="match status" value="1"/>
</dbReference>
<dbReference type="Pfam" id="PF00573">
    <property type="entry name" value="Ribosomal_L4"/>
    <property type="match status" value="1"/>
</dbReference>
<dbReference type="SUPFAM" id="SSF52166">
    <property type="entry name" value="Ribosomal protein L4"/>
    <property type="match status" value="1"/>
</dbReference>
<comment type="function">
    <text evidence="1">One of the primary rRNA binding proteins, this protein initially binds near the 5'-end of the 23S rRNA. It is important during the early stages of 50S assembly. It makes multiple contacts with different domains of the 23S rRNA in the assembled 50S subunit and ribosome.</text>
</comment>
<comment type="function">
    <text evidence="1">Forms part of the polypeptide exit tunnel.</text>
</comment>
<comment type="subunit">
    <text evidence="1">Part of the 50S ribosomal subunit.</text>
</comment>
<comment type="similarity">
    <text evidence="1">Belongs to the universal ribosomal protein uL4 family.</text>
</comment>
<gene>
    <name evidence="1" type="primary">rplD</name>
    <name type="ordered locus">SAHV_2233</name>
</gene>
<evidence type="ECO:0000255" key="1">
    <source>
        <dbReference type="HAMAP-Rule" id="MF_01328"/>
    </source>
</evidence>
<evidence type="ECO:0000256" key="2">
    <source>
        <dbReference type="SAM" id="MobiDB-lite"/>
    </source>
</evidence>
<evidence type="ECO:0000305" key="3"/>
<reference key="1">
    <citation type="journal article" date="2008" name="Antimicrob. Agents Chemother.">
        <title>Mutated response regulator graR is responsible for phenotypic conversion of Staphylococcus aureus from heterogeneous vancomycin-intermediate resistance to vancomycin-intermediate resistance.</title>
        <authorList>
            <person name="Neoh H.-M."/>
            <person name="Cui L."/>
            <person name="Yuzawa H."/>
            <person name="Takeuchi F."/>
            <person name="Matsuo M."/>
            <person name="Hiramatsu K."/>
        </authorList>
    </citation>
    <scope>NUCLEOTIDE SEQUENCE [LARGE SCALE GENOMIC DNA]</scope>
    <source>
        <strain>Mu3 / ATCC 700698</strain>
    </source>
</reference>